<proteinExistence type="inferred from homology"/>
<reference key="1">
    <citation type="journal article" date="2007" name="J. Bacteriol.">
        <title>The genome sequence of avian pathogenic Escherichia coli strain O1:K1:H7 shares strong similarities with human extraintestinal pathogenic E. coli genomes.</title>
        <authorList>
            <person name="Johnson T.J."/>
            <person name="Kariyawasam S."/>
            <person name="Wannemuehler Y."/>
            <person name="Mangiamele P."/>
            <person name="Johnson S.J."/>
            <person name="Doetkott C."/>
            <person name="Skyberg J.A."/>
            <person name="Lynne A.M."/>
            <person name="Johnson J.R."/>
            <person name="Nolan L.K."/>
        </authorList>
    </citation>
    <scope>NUCLEOTIDE SEQUENCE [LARGE SCALE GENOMIC DNA]</scope>
</reference>
<name>SLMA_ECOK1</name>
<accession>A1AHH2</accession>
<protein>
    <recommendedName>
        <fullName evidence="1">Nucleoid occlusion factor SlmA</fullName>
    </recommendedName>
</protein>
<organism>
    <name type="scientific">Escherichia coli O1:K1 / APEC</name>
    <dbReference type="NCBI Taxonomy" id="405955"/>
    <lineage>
        <taxon>Bacteria</taxon>
        <taxon>Pseudomonadati</taxon>
        <taxon>Pseudomonadota</taxon>
        <taxon>Gammaproteobacteria</taxon>
        <taxon>Enterobacterales</taxon>
        <taxon>Enterobacteriaceae</taxon>
        <taxon>Escherichia</taxon>
    </lineage>
</organism>
<feature type="chain" id="PRO_0000413758" description="Nucleoid occlusion factor SlmA">
    <location>
        <begin position="1"/>
        <end position="198"/>
    </location>
</feature>
<feature type="domain" description="HTH tetR-type" evidence="1">
    <location>
        <begin position="10"/>
        <end position="70"/>
    </location>
</feature>
<feature type="DNA-binding region" description="H-T-H motif" evidence="1">
    <location>
        <begin position="33"/>
        <end position="52"/>
    </location>
</feature>
<feature type="coiled-coil region" evidence="1">
    <location>
        <begin position="117"/>
        <end position="144"/>
    </location>
</feature>
<keyword id="KW-0131">Cell cycle</keyword>
<keyword id="KW-0132">Cell division</keyword>
<keyword id="KW-0175">Coiled coil</keyword>
<keyword id="KW-0963">Cytoplasm</keyword>
<keyword id="KW-0238">DNA-binding</keyword>
<keyword id="KW-1185">Reference proteome</keyword>
<comment type="function">
    <text evidence="1">Required for nucleoid occlusion (NO) phenomenon, which prevents Z-ring formation and cell division over the nucleoid. Acts as a DNA-associated cell division inhibitor that binds simultaneously chromosomal DNA and FtsZ, and disrupts the assembly of FtsZ polymers. SlmA-DNA-binding sequences (SBS) are dispersed on non-Ter regions of the chromosome, preventing FtsZ polymerization at these regions.</text>
</comment>
<comment type="subunit">
    <text evidence="1">Homodimer. Interacts with FtsZ.</text>
</comment>
<comment type="subcellular location">
    <subcellularLocation>
        <location evidence="1">Cytoplasm</location>
        <location evidence="1">Nucleoid</location>
    </subcellularLocation>
</comment>
<comment type="similarity">
    <text evidence="1">Belongs to the nucleoid occlusion factor SlmA family.</text>
</comment>
<comment type="sequence caution" evidence="2">
    <conflict type="erroneous initiation">
        <sequence resource="EMBL-CDS" id="ABJ03112"/>
    </conflict>
    <text>Extended N-terminus.</text>
</comment>
<evidence type="ECO:0000255" key="1">
    <source>
        <dbReference type="HAMAP-Rule" id="MF_01839"/>
    </source>
</evidence>
<evidence type="ECO:0000305" key="2"/>
<sequence>MAEKQTAKRNRREEILQSLALMLESSDGSQRITTAKLAASVGVSEAALYRHFPSKTRMFDSLIEFIEDSLITRINLILKDEKDTTARLRLIVLLLLGFGERNPGLTRILTGHALMFEQDRLQGRINQLFERIEAQLRQVLREKRMREGEGYATDETLLASQILAFCEGMLSRFVRSEFKYRPTDDFDARWPLIAAQLQ</sequence>
<gene>
    <name evidence="1" type="primary">slmA</name>
    <name type="ordered locus">Ecok1_36180</name>
    <name type="ORF">APECO1_2820</name>
</gene>
<dbReference type="EMBL" id="CP000468">
    <property type="protein sequence ID" value="ABJ03112.1"/>
    <property type="status" value="ALT_INIT"/>
    <property type="molecule type" value="Genomic_DNA"/>
</dbReference>
<dbReference type="RefSeq" id="WP_000818598.1">
    <property type="nucleotide sequence ID" value="NZ_CADILS010000011.1"/>
</dbReference>
<dbReference type="SMR" id="A1AHH2"/>
<dbReference type="KEGG" id="ecv:APECO1_2820"/>
<dbReference type="HOGENOM" id="CLU_069356_5_0_6"/>
<dbReference type="Proteomes" id="UP000008216">
    <property type="component" value="Chromosome"/>
</dbReference>
<dbReference type="GO" id="GO:0043590">
    <property type="term" value="C:bacterial nucleoid"/>
    <property type="evidence" value="ECO:0007669"/>
    <property type="project" value="UniProtKB-UniRule"/>
</dbReference>
<dbReference type="GO" id="GO:0005737">
    <property type="term" value="C:cytoplasm"/>
    <property type="evidence" value="ECO:0007669"/>
    <property type="project" value="UniProtKB-UniRule"/>
</dbReference>
<dbReference type="GO" id="GO:0003700">
    <property type="term" value="F:DNA-binding transcription factor activity"/>
    <property type="evidence" value="ECO:0007669"/>
    <property type="project" value="TreeGrafter"/>
</dbReference>
<dbReference type="GO" id="GO:0000976">
    <property type="term" value="F:transcription cis-regulatory region binding"/>
    <property type="evidence" value="ECO:0007669"/>
    <property type="project" value="TreeGrafter"/>
</dbReference>
<dbReference type="GO" id="GO:0051301">
    <property type="term" value="P:cell division"/>
    <property type="evidence" value="ECO:0007669"/>
    <property type="project" value="UniProtKB-KW"/>
</dbReference>
<dbReference type="GO" id="GO:0010974">
    <property type="term" value="P:negative regulation of division septum assembly"/>
    <property type="evidence" value="ECO:0007669"/>
    <property type="project" value="InterPro"/>
</dbReference>
<dbReference type="FunFam" id="1.10.357.10:FF:000002">
    <property type="entry name" value="Nucleoid occlusion factor SlmA"/>
    <property type="match status" value="1"/>
</dbReference>
<dbReference type="Gene3D" id="1.10.357.10">
    <property type="entry name" value="Tetracycline Repressor, domain 2"/>
    <property type="match status" value="1"/>
</dbReference>
<dbReference type="HAMAP" id="MF_01839">
    <property type="entry name" value="NO_factor_SlmA"/>
    <property type="match status" value="1"/>
</dbReference>
<dbReference type="InterPro" id="IPR023772">
    <property type="entry name" value="DNA-bd_HTH_TetR-type_CS"/>
</dbReference>
<dbReference type="InterPro" id="IPR009057">
    <property type="entry name" value="Homeodomain-like_sf"/>
</dbReference>
<dbReference type="InterPro" id="IPR050109">
    <property type="entry name" value="HTH-type_TetR-like_transc_reg"/>
</dbReference>
<dbReference type="InterPro" id="IPR001647">
    <property type="entry name" value="HTH_TetR"/>
</dbReference>
<dbReference type="InterPro" id="IPR023769">
    <property type="entry name" value="NO_SlmA"/>
</dbReference>
<dbReference type="InterPro" id="IPR054580">
    <property type="entry name" value="SlmA-like_C"/>
</dbReference>
<dbReference type="InterPro" id="IPR036271">
    <property type="entry name" value="Tet_transcr_reg_TetR-rel_C_sf"/>
</dbReference>
<dbReference type="NCBIfam" id="NF007015">
    <property type="entry name" value="PRK09480.1"/>
    <property type="match status" value="1"/>
</dbReference>
<dbReference type="PANTHER" id="PTHR30055">
    <property type="entry name" value="HTH-TYPE TRANSCRIPTIONAL REGULATOR RUTR"/>
    <property type="match status" value="1"/>
</dbReference>
<dbReference type="PANTHER" id="PTHR30055:SF183">
    <property type="entry name" value="NUCLEOID OCCLUSION FACTOR SLMA"/>
    <property type="match status" value="1"/>
</dbReference>
<dbReference type="Pfam" id="PF22276">
    <property type="entry name" value="SlmA-like_C"/>
    <property type="match status" value="1"/>
</dbReference>
<dbReference type="Pfam" id="PF00440">
    <property type="entry name" value="TetR_N"/>
    <property type="match status" value="1"/>
</dbReference>
<dbReference type="SUPFAM" id="SSF46689">
    <property type="entry name" value="Homeodomain-like"/>
    <property type="match status" value="1"/>
</dbReference>
<dbReference type="SUPFAM" id="SSF48498">
    <property type="entry name" value="Tetracyclin repressor-like, C-terminal domain"/>
    <property type="match status" value="1"/>
</dbReference>
<dbReference type="PROSITE" id="PS01081">
    <property type="entry name" value="HTH_TETR_1"/>
    <property type="match status" value="1"/>
</dbReference>
<dbReference type="PROSITE" id="PS50977">
    <property type="entry name" value="HTH_TETR_2"/>
    <property type="match status" value="1"/>
</dbReference>